<organism>
    <name type="scientific">Pseudomonas aeruginosa (strain LESB58)</name>
    <dbReference type="NCBI Taxonomy" id="557722"/>
    <lineage>
        <taxon>Bacteria</taxon>
        <taxon>Pseudomonadati</taxon>
        <taxon>Pseudomonadota</taxon>
        <taxon>Gammaproteobacteria</taxon>
        <taxon>Pseudomonadales</taxon>
        <taxon>Pseudomonadaceae</taxon>
        <taxon>Pseudomonas</taxon>
    </lineage>
</organism>
<keyword id="KW-0474">Menaquinone biosynthesis</keyword>
<keyword id="KW-0489">Methyltransferase</keyword>
<keyword id="KW-0949">S-adenosyl-L-methionine</keyword>
<keyword id="KW-0808">Transferase</keyword>
<keyword id="KW-0831">Ubiquinone biosynthesis</keyword>
<gene>
    <name evidence="1" type="primary">ubiE</name>
    <name type="ordered locus">PLES_54531</name>
</gene>
<evidence type="ECO:0000255" key="1">
    <source>
        <dbReference type="HAMAP-Rule" id="MF_01813"/>
    </source>
</evidence>
<reference key="1">
    <citation type="journal article" date="2009" name="Genome Res.">
        <title>Newly introduced genomic prophage islands are critical determinants of in vivo competitiveness in the Liverpool epidemic strain of Pseudomonas aeruginosa.</title>
        <authorList>
            <person name="Winstanley C."/>
            <person name="Langille M.G.I."/>
            <person name="Fothergill J.L."/>
            <person name="Kukavica-Ibrulj I."/>
            <person name="Paradis-Bleau C."/>
            <person name="Sanschagrin F."/>
            <person name="Thomson N.R."/>
            <person name="Winsor G.L."/>
            <person name="Quail M.A."/>
            <person name="Lennard N."/>
            <person name="Bignell A."/>
            <person name="Clarke L."/>
            <person name="Seeger K."/>
            <person name="Saunders D."/>
            <person name="Harris D."/>
            <person name="Parkhill J."/>
            <person name="Hancock R.E.W."/>
            <person name="Brinkman F.S.L."/>
            <person name="Levesque R.C."/>
        </authorList>
    </citation>
    <scope>NUCLEOTIDE SEQUENCE [LARGE SCALE GENOMIC DNA]</scope>
    <source>
        <strain>LESB58</strain>
    </source>
</reference>
<proteinExistence type="inferred from homology"/>
<feature type="chain" id="PRO_1000187788" description="Ubiquinone/menaquinone biosynthesis C-methyltransferase UbiE">
    <location>
        <begin position="1"/>
        <end position="256"/>
    </location>
</feature>
<feature type="binding site" evidence="1">
    <location>
        <position position="79"/>
    </location>
    <ligand>
        <name>S-adenosyl-L-methionine</name>
        <dbReference type="ChEBI" id="CHEBI:59789"/>
    </ligand>
</feature>
<feature type="binding site" evidence="1">
    <location>
        <position position="100"/>
    </location>
    <ligand>
        <name>S-adenosyl-L-methionine</name>
        <dbReference type="ChEBI" id="CHEBI:59789"/>
    </ligand>
</feature>
<feature type="binding site" evidence="1">
    <location>
        <begin position="128"/>
        <end position="129"/>
    </location>
    <ligand>
        <name>S-adenosyl-L-methionine</name>
        <dbReference type="ChEBI" id="CHEBI:59789"/>
    </ligand>
</feature>
<comment type="function">
    <text evidence="1">Methyltransferase required for the conversion of demethylmenaquinol (DMKH2) to menaquinol (MKH2) and the conversion of 2-polyprenyl-6-methoxy-1,4-benzoquinol (DDMQH2) to 2-polyprenyl-3-methyl-6-methoxy-1,4-benzoquinol (DMQH2).</text>
</comment>
<comment type="catalytic activity">
    <reaction evidence="1">
        <text>a 2-demethylmenaquinol + S-adenosyl-L-methionine = a menaquinol + S-adenosyl-L-homocysteine + H(+)</text>
        <dbReference type="Rhea" id="RHEA:42640"/>
        <dbReference type="Rhea" id="RHEA-COMP:9539"/>
        <dbReference type="Rhea" id="RHEA-COMP:9563"/>
        <dbReference type="ChEBI" id="CHEBI:15378"/>
        <dbReference type="ChEBI" id="CHEBI:18151"/>
        <dbReference type="ChEBI" id="CHEBI:55437"/>
        <dbReference type="ChEBI" id="CHEBI:57856"/>
        <dbReference type="ChEBI" id="CHEBI:59789"/>
        <dbReference type="EC" id="2.1.1.163"/>
    </reaction>
</comment>
<comment type="catalytic activity">
    <reaction evidence="1">
        <text>a 2-methoxy-6-(all-trans-polyprenyl)benzene-1,4-diol + S-adenosyl-L-methionine = a 5-methoxy-2-methyl-3-(all-trans-polyprenyl)benzene-1,4-diol + S-adenosyl-L-homocysteine + H(+)</text>
        <dbReference type="Rhea" id="RHEA:28286"/>
        <dbReference type="Rhea" id="RHEA-COMP:10858"/>
        <dbReference type="Rhea" id="RHEA-COMP:10859"/>
        <dbReference type="ChEBI" id="CHEBI:15378"/>
        <dbReference type="ChEBI" id="CHEBI:57856"/>
        <dbReference type="ChEBI" id="CHEBI:59789"/>
        <dbReference type="ChEBI" id="CHEBI:84166"/>
        <dbReference type="ChEBI" id="CHEBI:84167"/>
        <dbReference type="EC" id="2.1.1.201"/>
    </reaction>
</comment>
<comment type="pathway">
    <text evidence="1">Quinol/quinone metabolism; menaquinone biosynthesis; menaquinol from 1,4-dihydroxy-2-naphthoate: step 2/2.</text>
</comment>
<comment type="pathway">
    <text evidence="1">Cofactor biosynthesis; ubiquinone biosynthesis.</text>
</comment>
<comment type="similarity">
    <text evidence="1">Belongs to the class I-like SAM-binding methyltransferase superfamily. MenG/UbiE family.</text>
</comment>
<protein>
    <recommendedName>
        <fullName evidence="1">Ubiquinone/menaquinone biosynthesis C-methyltransferase UbiE</fullName>
        <ecNumber evidence="1">2.1.1.163</ecNumber>
        <ecNumber evidence="1">2.1.1.201</ecNumber>
    </recommendedName>
    <alternativeName>
        <fullName evidence="1">2-methoxy-6-polyprenyl-1,4-benzoquinol methylase</fullName>
    </alternativeName>
    <alternativeName>
        <fullName evidence="1">Demethylmenaquinone methyltransferase</fullName>
    </alternativeName>
</protein>
<sequence length="256" mass="28254">MNDPRKGADAEPTTHFGYQNVPESQKAKKVAEVFHSVAAKYDLMNDLMSGGIHRLWKRFTIELSGVRSGNRVLDIAGGTGDLTRQFSRLVGPTGEVVLADINASMLKVGRDKLLDKGVSGNVSFVQADAEKLPFPDNHFDCVTIAFGLRNVTHKDEAIRSMLRVLKPGGRLLVLEFSKPSSNLLSKAYDAYSFSLLPLMGKLVTNDSESYRYLAESIRMHPDQETLKAMMVEAGFDRVTYHNMTGGIVALHRGIKP</sequence>
<dbReference type="EC" id="2.1.1.163" evidence="1"/>
<dbReference type="EC" id="2.1.1.201" evidence="1"/>
<dbReference type="EMBL" id="FM209186">
    <property type="protein sequence ID" value="CAW30207.1"/>
    <property type="molecule type" value="Genomic_DNA"/>
</dbReference>
<dbReference type="RefSeq" id="WP_003103462.1">
    <property type="nucleotide sequence ID" value="NC_011770.1"/>
</dbReference>
<dbReference type="SMR" id="B7V3F6"/>
<dbReference type="KEGG" id="pag:PLES_54531"/>
<dbReference type="HOGENOM" id="CLU_037990_0_0_6"/>
<dbReference type="UniPathway" id="UPA00079">
    <property type="reaction ID" value="UER00169"/>
</dbReference>
<dbReference type="UniPathway" id="UPA00232"/>
<dbReference type="GO" id="GO:0008425">
    <property type="term" value="F:2-methoxy-6-polyprenyl-1,4-benzoquinol methyltransferase activity"/>
    <property type="evidence" value="ECO:0007669"/>
    <property type="project" value="UniProtKB-UniRule"/>
</dbReference>
<dbReference type="GO" id="GO:0043770">
    <property type="term" value="F:demethylmenaquinone methyltransferase activity"/>
    <property type="evidence" value="ECO:0007669"/>
    <property type="project" value="UniProtKB-UniRule"/>
</dbReference>
<dbReference type="GO" id="GO:0009060">
    <property type="term" value="P:aerobic respiration"/>
    <property type="evidence" value="ECO:0007669"/>
    <property type="project" value="UniProtKB-UniRule"/>
</dbReference>
<dbReference type="GO" id="GO:0009234">
    <property type="term" value="P:menaquinone biosynthetic process"/>
    <property type="evidence" value="ECO:0007669"/>
    <property type="project" value="UniProtKB-UniRule"/>
</dbReference>
<dbReference type="GO" id="GO:0032259">
    <property type="term" value="P:methylation"/>
    <property type="evidence" value="ECO:0007669"/>
    <property type="project" value="UniProtKB-KW"/>
</dbReference>
<dbReference type="CDD" id="cd02440">
    <property type="entry name" value="AdoMet_MTases"/>
    <property type="match status" value="1"/>
</dbReference>
<dbReference type="FunFam" id="3.40.50.150:FF:000014">
    <property type="entry name" value="Ubiquinone/menaquinone biosynthesis C-methyltransferase UbiE"/>
    <property type="match status" value="1"/>
</dbReference>
<dbReference type="Gene3D" id="3.40.50.150">
    <property type="entry name" value="Vaccinia Virus protein VP39"/>
    <property type="match status" value="1"/>
</dbReference>
<dbReference type="HAMAP" id="MF_01813">
    <property type="entry name" value="MenG_UbiE_methyltr"/>
    <property type="match status" value="1"/>
</dbReference>
<dbReference type="InterPro" id="IPR029063">
    <property type="entry name" value="SAM-dependent_MTases_sf"/>
</dbReference>
<dbReference type="InterPro" id="IPR004033">
    <property type="entry name" value="UbiE/COQ5_MeTrFase"/>
</dbReference>
<dbReference type="InterPro" id="IPR023576">
    <property type="entry name" value="UbiE/COQ5_MeTrFase_CS"/>
</dbReference>
<dbReference type="NCBIfam" id="TIGR01934">
    <property type="entry name" value="MenG_MenH_UbiE"/>
    <property type="match status" value="1"/>
</dbReference>
<dbReference type="NCBIfam" id="NF001240">
    <property type="entry name" value="PRK00216.1-1"/>
    <property type="match status" value="1"/>
</dbReference>
<dbReference type="NCBIfam" id="NF001244">
    <property type="entry name" value="PRK00216.1-5"/>
    <property type="match status" value="1"/>
</dbReference>
<dbReference type="PANTHER" id="PTHR43591:SF24">
    <property type="entry name" value="2-METHOXY-6-POLYPRENYL-1,4-BENZOQUINOL METHYLASE, MITOCHONDRIAL"/>
    <property type="match status" value="1"/>
</dbReference>
<dbReference type="PANTHER" id="PTHR43591">
    <property type="entry name" value="METHYLTRANSFERASE"/>
    <property type="match status" value="1"/>
</dbReference>
<dbReference type="Pfam" id="PF01209">
    <property type="entry name" value="Ubie_methyltran"/>
    <property type="match status" value="1"/>
</dbReference>
<dbReference type="SUPFAM" id="SSF53335">
    <property type="entry name" value="S-adenosyl-L-methionine-dependent methyltransferases"/>
    <property type="match status" value="1"/>
</dbReference>
<dbReference type="PROSITE" id="PS51608">
    <property type="entry name" value="SAM_MT_UBIE"/>
    <property type="match status" value="1"/>
</dbReference>
<dbReference type="PROSITE" id="PS01183">
    <property type="entry name" value="UBIE_1"/>
    <property type="match status" value="1"/>
</dbReference>
<dbReference type="PROSITE" id="PS01184">
    <property type="entry name" value="UBIE_2"/>
    <property type="match status" value="1"/>
</dbReference>
<accession>B7V3F6</accession>
<name>UBIE_PSEA8</name>